<proteinExistence type="inferred from homology"/>
<comment type="function">
    <text evidence="1">Acts as an anti-CsrA protein, binds CsrA and prevents it from repressing translation of its target genes, one of which is flagellin. Binds to flagellin and participates in the assembly of the flagellum.</text>
</comment>
<comment type="subunit">
    <text evidence="1">Interacts with translational regulator CsrA and flagellin(s).</text>
</comment>
<comment type="subcellular location">
    <subcellularLocation>
        <location evidence="1">Cytoplasm</location>
    </subcellularLocation>
</comment>
<comment type="similarity">
    <text evidence="1">Belongs to the FliW family.</text>
</comment>
<organism>
    <name type="scientific">Chromobacterium violaceum (strain ATCC 12472 / DSM 30191 / JCM 1249 / CCUG 213 / NBRC 12614 / NCIMB 9131 / NCTC 9757 / MK)</name>
    <dbReference type="NCBI Taxonomy" id="243365"/>
    <lineage>
        <taxon>Bacteria</taxon>
        <taxon>Pseudomonadati</taxon>
        <taxon>Pseudomonadota</taxon>
        <taxon>Betaproteobacteria</taxon>
        <taxon>Neisseriales</taxon>
        <taxon>Chromobacteriaceae</taxon>
        <taxon>Chromobacterium</taxon>
    </lineage>
</organism>
<reference key="1">
    <citation type="journal article" date="2003" name="Proc. Natl. Acad. Sci. U.S.A.">
        <title>The complete genome sequence of Chromobacterium violaceum reveals remarkable and exploitable bacterial adaptability.</title>
        <authorList>
            <person name="Vasconcelos A.T.R."/>
            <person name="de Almeida D.F."/>
            <person name="Hungria M."/>
            <person name="Guimaraes C.T."/>
            <person name="Antonio R.V."/>
            <person name="Almeida F.C."/>
            <person name="de Almeida L.G.P."/>
            <person name="de Almeida R."/>
            <person name="Alves-Gomes J.A."/>
            <person name="Andrade E.M."/>
            <person name="Araripe J."/>
            <person name="de Araujo M.F.F."/>
            <person name="Astolfi-Filho S."/>
            <person name="Azevedo V."/>
            <person name="Baptista A.J."/>
            <person name="Bataus L.A.M."/>
            <person name="Batista J.S."/>
            <person name="Belo A."/>
            <person name="van den Berg C."/>
            <person name="Bogo M."/>
            <person name="Bonatto S."/>
            <person name="Bordignon J."/>
            <person name="Brigido M.M."/>
            <person name="Brito C.A."/>
            <person name="Brocchi M."/>
            <person name="Burity H.A."/>
            <person name="Camargo A.A."/>
            <person name="Cardoso D.D.P."/>
            <person name="Carneiro N.P."/>
            <person name="Carraro D.M."/>
            <person name="Carvalho C.M.B."/>
            <person name="Cascardo J.C.M."/>
            <person name="Cavada B.S."/>
            <person name="Chueire L.M.O."/>
            <person name="Creczynski-Pasa T.B."/>
            <person name="Cunha-Junior N.C."/>
            <person name="Fagundes N."/>
            <person name="Falcao C.L."/>
            <person name="Fantinatti F."/>
            <person name="Farias I.P."/>
            <person name="Felipe M.S.S."/>
            <person name="Ferrari L.P."/>
            <person name="Ferro J.A."/>
            <person name="Ferro M.I.T."/>
            <person name="Franco G.R."/>
            <person name="Freitas N.S.A."/>
            <person name="Furlan L.R."/>
            <person name="Gazzinelli R.T."/>
            <person name="Gomes E.A."/>
            <person name="Goncalves P.R."/>
            <person name="Grangeiro T.B."/>
            <person name="Grattapaglia D."/>
            <person name="Grisard E.C."/>
            <person name="Hanna E.S."/>
            <person name="Jardim S.N."/>
            <person name="Laurino J."/>
            <person name="Leoi L.C.T."/>
            <person name="Lima L.F.A."/>
            <person name="Loureiro M.F."/>
            <person name="Lyra M.C.C.P."/>
            <person name="Madeira H.M.F."/>
            <person name="Manfio G.P."/>
            <person name="Maranhao A.Q."/>
            <person name="Martins W.S."/>
            <person name="di Mauro S.M.Z."/>
            <person name="de Medeiros S.R.B."/>
            <person name="Meissner R.V."/>
            <person name="Moreira M.A.M."/>
            <person name="Nascimento F.F."/>
            <person name="Nicolas M.F."/>
            <person name="Oliveira J.G."/>
            <person name="Oliveira S.C."/>
            <person name="Paixao R.F.C."/>
            <person name="Parente J.A."/>
            <person name="Pedrosa F.O."/>
            <person name="Pena S.D.J."/>
            <person name="Pereira J.O."/>
            <person name="Pereira M."/>
            <person name="Pinto L.S.R.C."/>
            <person name="Pinto L.S."/>
            <person name="Porto J.I.R."/>
            <person name="Potrich D.P."/>
            <person name="Ramalho-Neto C.E."/>
            <person name="Reis A.M.M."/>
            <person name="Rigo L.U."/>
            <person name="Rondinelli E."/>
            <person name="Santos E.B.P."/>
            <person name="Santos F.R."/>
            <person name="Schneider M.P.C."/>
            <person name="Seuanez H.N."/>
            <person name="Silva A.M.R."/>
            <person name="da Silva A.L.C."/>
            <person name="Silva D.W."/>
            <person name="Silva R."/>
            <person name="Simoes I.C."/>
            <person name="Simon D."/>
            <person name="Soares C.M.A."/>
            <person name="Soares R.B.A."/>
            <person name="Souza E.M."/>
            <person name="Souza K.R.L."/>
            <person name="Souza R.C."/>
            <person name="Steffens M.B.R."/>
            <person name="Steindel M."/>
            <person name="Teixeira S.R."/>
            <person name="Urmenyi T."/>
            <person name="Vettore A."/>
            <person name="Wassem R."/>
            <person name="Zaha A."/>
            <person name="Simpson A.J.G."/>
        </authorList>
    </citation>
    <scope>NUCLEOTIDE SEQUENCE [LARGE SCALE GENOMIC DNA]</scope>
    <source>
        <strain>ATCC 12472 / DSM 30191 / JCM 1249 / CCUG 213 / NBRC 12614 / NCIMB 9131 / NCTC 9757 / MK</strain>
    </source>
</reference>
<feature type="chain" id="PRO_0000272978" description="Flagellar assembly factor FliW">
    <location>
        <begin position="1"/>
        <end position="147"/>
    </location>
</feature>
<gene>
    <name evidence="1" type="primary">fliW</name>
    <name type="ordered locus">CV_1946</name>
</gene>
<sequence length="147" mass="16466">MRFDSNQLGNVEVDETTIITFPQGIPALENCTRFKLFHDITQPTPQMYWLQSLDDPGITFSLALPDRLGVRFQIELSDEEVAQLQLSGPQDAAILLMLYRPLDLDRDSHPVLGALQANLCNPLVISLSSRRGIQKTGLKIDILLHTP</sequence>
<keyword id="KW-1005">Bacterial flagellum biogenesis</keyword>
<keyword id="KW-0143">Chaperone</keyword>
<keyword id="KW-0963">Cytoplasm</keyword>
<keyword id="KW-1185">Reference proteome</keyword>
<keyword id="KW-0810">Translation regulation</keyword>
<dbReference type="EMBL" id="AE016825">
    <property type="protein sequence ID" value="AAQ59620.1"/>
    <property type="molecule type" value="Genomic_DNA"/>
</dbReference>
<dbReference type="RefSeq" id="WP_011135497.1">
    <property type="nucleotide sequence ID" value="NC_005085.1"/>
</dbReference>
<dbReference type="SMR" id="Q7NWN5"/>
<dbReference type="STRING" id="243365.CV_1946"/>
<dbReference type="GeneID" id="66367614"/>
<dbReference type="KEGG" id="cvi:CV_1946"/>
<dbReference type="eggNOG" id="COG1699">
    <property type="taxonomic scope" value="Bacteria"/>
</dbReference>
<dbReference type="HOGENOM" id="CLU_112356_0_1_4"/>
<dbReference type="OrthoDB" id="9801235at2"/>
<dbReference type="Proteomes" id="UP000001424">
    <property type="component" value="Chromosome"/>
</dbReference>
<dbReference type="GO" id="GO:0005737">
    <property type="term" value="C:cytoplasm"/>
    <property type="evidence" value="ECO:0007669"/>
    <property type="project" value="UniProtKB-SubCell"/>
</dbReference>
<dbReference type="GO" id="GO:0044780">
    <property type="term" value="P:bacterial-type flagellum assembly"/>
    <property type="evidence" value="ECO:0007669"/>
    <property type="project" value="UniProtKB-UniRule"/>
</dbReference>
<dbReference type="GO" id="GO:0006417">
    <property type="term" value="P:regulation of translation"/>
    <property type="evidence" value="ECO:0007669"/>
    <property type="project" value="UniProtKB-KW"/>
</dbReference>
<dbReference type="Gene3D" id="2.30.290.10">
    <property type="entry name" value="BH3618-like"/>
    <property type="match status" value="1"/>
</dbReference>
<dbReference type="HAMAP" id="MF_01185">
    <property type="entry name" value="FliW"/>
    <property type="match status" value="1"/>
</dbReference>
<dbReference type="InterPro" id="IPR003775">
    <property type="entry name" value="Flagellar_assembly_factor_FliW"/>
</dbReference>
<dbReference type="InterPro" id="IPR024046">
    <property type="entry name" value="Flagellar_assmbl_FliW_dom_sf"/>
</dbReference>
<dbReference type="NCBIfam" id="NF009792">
    <property type="entry name" value="PRK13284.1"/>
    <property type="match status" value="1"/>
</dbReference>
<dbReference type="PANTHER" id="PTHR39190">
    <property type="entry name" value="FLAGELLAR ASSEMBLY FACTOR FLIW"/>
    <property type="match status" value="1"/>
</dbReference>
<dbReference type="PANTHER" id="PTHR39190:SF1">
    <property type="entry name" value="FLAGELLAR ASSEMBLY FACTOR FLIW"/>
    <property type="match status" value="1"/>
</dbReference>
<dbReference type="Pfam" id="PF02623">
    <property type="entry name" value="FliW"/>
    <property type="match status" value="1"/>
</dbReference>
<dbReference type="SUPFAM" id="SSF141457">
    <property type="entry name" value="BH3618-like"/>
    <property type="match status" value="1"/>
</dbReference>
<protein>
    <recommendedName>
        <fullName evidence="1">Flagellar assembly factor FliW</fullName>
    </recommendedName>
</protein>
<accession>Q7NWN5</accession>
<evidence type="ECO:0000255" key="1">
    <source>
        <dbReference type="HAMAP-Rule" id="MF_01185"/>
    </source>
</evidence>
<name>FLIW_CHRVO</name>